<keyword id="KW-1185">Reference proteome</keyword>
<reference key="1">
    <citation type="journal article" date="2002" name="Proc. Natl. Acad. Sci. U.S.A.">
        <title>The complete genome of hyperthermophile Methanopyrus kandleri AV19 and monophyly of archaeal methanogens.</title>
        <authorList>
            <person name="Slesarev A.I."/>
            <person name="Mezhevaya K.V."/>
            <person name="Makarova K.S."/>
            <person name="Polushin N.N."/>
            <person name="Shcherbinina O.V."/>
            <person name="Shakhova V.V."/>
            <person name="Belova G.I."/>
            <person name="Aravind L."/>
            <person name="Natale D.A."/>
            <person name="Rogozin I.B."/>
            <person name="Tatusov R.L."/>
            <person name="Wolf Y.I."/>
            <person name="Stetter K.O."/>
            <person name="Malykh A.G."/>
            <person name="Koonin E.V."/>
            <person name="Kozyavkin S.A."/>
        </authorList>
    </citation>
    <scope>NUCLEOTIDE SEQUENCE [LARGE SCALE GENOMIC DNA]</scope>
    <source>
        <strain>AV19 / DSM 6324 / JCM 9639 / NBRC 100938</strain>
    </source>
</reference>
<gene>
    <name type="ordered locus">MK0213</name>
</gene>
<comment type="similarity">
    <text evidence="1">Belongs to the UPF0282 family.</text>
</comment>
<evidence type="ECO:0000255" key="1">
    <source>
        <dbReference type="HAMAP-Rule" id="MF_01406"/>
    </source>
</evidence>
<proteinExistence type="inferred from homology"/>
<organism>
    <name type="scientific">Methanopyrus kandleri (strain AV19 / DSM 6324 / JCM 9639 / NBRC 100938)</name>
    <dbReference type="NCBI Taxonomy" id="190192"/>
    <lineage>
        <taxon>Archaea</taxon>
        <taxon>Methanobacteriati</taxon>
        <taxon>Methanobacteriota</taxon>
        <taxon>Methanomada group</taxon>
        <taxon>Methanopyri</taxon>
        <taxon>Methanopyrales</taxon>
        <taxon>Methanopyraceae</taxon>
        <taxon>Methanopyrus</taxon>
    </lineage>
</organism>
<dbReference type="EMBL" id="AE009439">
    <property type="protein sequence ID" value="AAM01430.1"/>
    <property type="molecule type" value="Genomic_DNA"/>
</dbReference>
<dbReference type="STRING" id="190192.MK0213"/>
<dbReference type="PaxDb" id="190192-MK0213"/>
<dbReference type="EnsemblBacteria" id="AAM01430">
    <property type="protein sequence ID" value="AAM01430"/>
    <property type="gene ID" value="MK0213"/>
</dbReference>
<dbReference type="KEGG" id="mka:MK0213"/>
<dbReference type="HOGENOM" id="CLU_079268_0_0_2"/>
<dbReference type="InParanoid" id="Q8TYS9"/>
<dbReference type="Proteomes" id="UP000001826">
    <property type="component" value="Chromosome"/>
</dbReference>
<dbReference type="Gene3D" id="3.60.15.10">
    <property type="entry name" value="Ribonuclease Z/Hydroxyacylglutathione hydrolase-like"/>
    <property type="match status" value="1"/>
</dbReference>
<dbReference type="HAMAP" id="MF_01406">
    <property type="entry name" value="UPF0282"/>
    <property type="match status" value="1"/>
</dbReference>
<dbReference type="InterPro" id="IPR036866">
    <property type="entry name" value="RibonucZ/Hydroxyglut_hydro"/>
</dbReference>
<dbReference type="InterPro" id="IPR050114">
    <property type="entry name" value="UPF0173_UPF0282_UlaG_hydrolase"/>
</dbReference>
<dbReference type="InterPro" id="IPR014426">
    <property type="entry name" value="UPF0282_hydrls"/>
</dbReference>
<dbReference type="PANTHER" id="PTHR43546">
    <property type="entry name" value="UPF0173 METAL-DEPENDENT HYDROLASE MJ1163-RELATED"/>
    <property type="match status" value="1"/>
</dbReference>
<dbReference type="PANTHER" id="PTHR43546:SF4">
    <property type="entry name" value="UPF0282 PROTEIN MJ1629"/>
    <property type="match status" value="1"/>
</dbReference>
<dbReference type="Pfam" id="PF13483">
    <property type="entry name" value="Lactamase_B_3"/>
    <property type="match status" value="1"/>
</dbReference>
<dbReference type="PIRSF" id="PIRSF004944">
    <property type="entry name" value="UCP004944_hydrls"/>
    <property type="match status" value="1"/>
</dbReference>
<dbReference type="SUPFAM" id="SSF56281">
    <property type="entry name" value="Metallo-hydrolase/oxidoreductase"/>
    <property type="match status" value="1"/>
</dbReference>
<sequence>MRVVPLGFESLGVRSMATLIETPDVTVLVDPGVSIPPKRYNLPPSEEEWEALEEVRESIQRAADSADVVTISHYHYDHHTPFTDRKYEACDLETAKELYRDKLILMKHPTENINRSQAGRARALIEGLDELGVDYEFADGKRFEFGETVLEFSQPLPHGPEGTRLGYVLGLRITHRDHVIVHASDVQGPVYGPALEWILERDPDLVLISGPPTYLLGFRFSSDNLEKAVKNLRKLASRSGQIILDHHLLRDKNYRDRLSEVYEESDNVASAAEVLGKEERLLEAYRDELSGEE</sequence>
<accession>Q8TYS9</accession>
<name>Y213_METKA</name>
<feature type="chain" id="PRO_0000057632" description="UPF0282 protein MK0213">
    <location>
        <begin position="1"/>
        <end position="293"/>
    </location>
</feature>
<protein>
    <recommendedName>
        <fullName evidence="1">UPF0282 protein MK0213</fullName>
    </recommendedName>
</protein>